<dbReference type="EC" id="3.2.2.-" evidence="1"/>
<dbReference type="EMBL" id="BA000045">
    <property type="protein sequence ID" value="BAC90432.1"/>
    <property type="molecule type" value="Genomic_DNA"/>
</dbReference>
<dbReference type="RefSeq" id="NP_925437.1">
    <property type="nucleotide sequence ID" value="NC_005125.1"/>
</dbReference>
<dbReference type="RefSeq" id="WP_011142486.1">
    <property type="nucleotide sequence ID" value="NC_005125.1"/>
</dbReference>
<dbReference type="SMR" id="Q7NHP4"/>
<dbReference type="STRING" id="251221.gene:10759990"/>
<dbReference type="EnsemblBacteria" id="BAC90432">
    <property type="protein sequence ID" value="BAC90432"/>
    <property type="gene ID" value="BAC90432"/>
</dbReference>
<dbReference type="KEGG" id="gvi:gll2491"/>
<dbReference type="PATRIC" id="fig|251221.4.peg.2529"/>
<dbReference type="eggNOG" id="COG2094">
    <property type="taxonomic scope" value="Bacteria"/>
</dbReference>
<dbReference type="HOGENOM" id="CLU_060471_3_0_3"/>
<dbReference type="InParanoid" id="Q7NHP4"/>
<dbReference type="OrthoDB" id="9794313at2"/>
<dbReference type="PhylomeDB" id="Q7NHP4"/>
<dbReference type="Proteomes" id="UP000000557">
    <property type="component" value="Chromosome"/>
</dbReference>
<dbReference type="GO" id="GO:0003905">
    <property type="term" value="F:alkylbase DNA N-glycosylase activity"/>
    <property type="evidence" value="ECO:0000318"/>
    <property type="project" value="GO_Central"/>
</dbReference>
<dbReference type="GO" id="GO:0003677">
    <property type="term" value="F:DNA binding"/>
    <property type="evidence" value="ECO:0007669"/>
    <property type="project" value="InterPro"/>
</dbReference>
<dbReference type="GO" id="GO:0006284">
    <property type="term" value="P:base-excision repair"/>
    <property type="evidence" value="ECO:0000318"/>
    <property type="project" value="GO_Central"/>
</dbReference>
<dbReference type="CDD" id="cd00540">
    <property type="entry name" value="AAG"/>
    <property type="match status" value="1"/>
</dbReference>
<dbReference type="Gene3D" id="3.10.300.10">
    <property type="entry name" value="Methylpurine-DNA glycosylase (MPG)"/>
    <property type="match status" value="1"/>
</dbReference>
<dbReference type="HAMAP" id="MF_00527">
    <property type="entry name" value="3MGH"/>
    <property type="match status" value="1"/>
</dbReference>
<dbReference type="InterPro" id="IPR011034">
    <property type="entry name" value="Formyl_transferase-like_C_sf"/>
</dbReference>
<dbReference type="InterPro" id="IPR003180">
    <property type="entry name" value="MPG"/>
</dbReference>
<dbReference type="InterPro" id="IPR036995">
    <property type="entry name" value="MPG_sf"/>
</dbReference>
<dbReference type="NCBIfam" id="TIGR00567">
    <property type="entry name" value="3mg"/>
    <property type="match status" value="1"/>
</dbReference>
<dbReference type="PANTHER" id="PTHR10429">
    <property type="entry name" value="DNA-3-METHYLADENINE GLYCOSYLASE"/>
    <property type="match status" value="1"/>
</dbReference>
<dbReference type="PANTHER" id="PTHR10429:SF0">
    <property type="entry name" value="DNA-3-METHYLADENINE GLYCOSYLASE"/>
    <property type="match status" value="1"/>
</dbReference>
<dbReference type="Pfam" id="PF02245">
    <property type="entry name" value="Pur_DNA_glyco"/>
    <property type="match status" value="1"/>
</dbReference>
<dbReference type="SUPFAM" id="SSF50486">
    <property type="entry name" value="FMT C-terminal domain-like"/>
    <property type="match status" value="1"/>
</dbReference>
<proteinExistence type="inferred from homology"/>
<name>3MGH_GLOVI</name>
<protein>
    <recommendedName>
        <fullName evidence="1">Putative 3-methyladenine DNA glycosylase</fullName>
        <ecNumber evidence="1">3.2.2.-</ecNumber>
    </recommendedName>
</protein>
<sequence>MRVHHPYHEIPVETLNVDFFNLSPLSVARRLIGCAVVRVLAGERLSGRIVETEAYGGLRDPSCYVVRRDERIWSLLSGPPGVLYLHRAYRHWLLNITCDAVGEPACVLIRALEPTGGEERMRQLRRGARDLTNGPARLVEALAIDSAWEASALPRAEFWLEAGEPVPEEQVLNTVRIGLTRGKDLPWRFAVRDSPWVSRSVEAVLSEASLSAGL</sequence>
<gene>
    <name type="ordered locus">gll2491</name>
</gene>
<reference key="1">
    <citation type="journal article" date="2003" name="DNA Res.">
        <title>Complete genome structure of Gloeobacter violaceus PCC 7421, a cyanobacterium that lacks thylakoids.</title>
        <authorList>
            <person name="Nakamura Y."/>
            <person name="Kaneko T."/>
            <person name="Sato S."/>
            <person name="Mimuro M."/>
            <person name="Miyashita H."/>
            <person name="Tsuchiya T."/>
            <person name="Sasamoto S."/>
            <person name="Watanabe A."/>
            <person name="Kawashima K."/>
            <person name="Kishida Y."/>
            <person name="Kiyokawa C."/>
            <person name="Kohara M."/>
            <person name="Matsumoto M."/>
            <person name="Matsuno A."/>
            <person name="Nakazaki N."/>
            <person name="Shimpo S."/>
            <person name="Takeuchi C."/>
            <person name="Yamada M."/>
            <person name="Tabata S."/>
        </authorList>
    </citation>
    <scope>NUCLEOTIDE SEQUENCE [LARGE SCALE GENOMIC DNA]</scope>
    <source>
        <strain>ATCC 29082 / PCC 7421</strain>
    </source>
</reference>
<feature type="chain" id="PRO_0000100087" description="Putative 3-methyladenine DNA glycosylase">
    <location>
        <begin position="1"/>
        <end position="214"/>
    </location>
</feature>
<keyword id="KW-0227">DNA damage</keyword>
<keyword id="KW-0234">DNA repair</keyword>
<keyword id="KW-0378">Hydrolase</keyword>
<keyword id="KW-1185">Reference proteome</keyword>
<accession>Q7NHP4</accession>
<comment type="similarity">
    <text evidence="1">Belongs to the DNA glycosylase MPG family.</text>
</comment>
<organism>
    <name type="scientific">Gloeobacter violaceus (strain ATCC 29082 / PCC 7421)</name>
    <dbReference type="NCBI Taxonomy" id="251221"/>
    <lineage>
        <taxon>Bacteria</taxon>
        <taxon>Bacillati</taxon>
        <taxon>Cyanobacteriota</taxon>
        <taxon>Cyanophyceae</taxon>
        <taxon>Gloeobacterales</taxon>
        <taxon>Gloeobacteraceae</taxon>
        <taxon>Gloeobacter</taxon>
    </lineage>
</organism>
<evidence type="ECO:0000255" key="1">
    <source>
        <dbReference type="HAMAP-Rule" id="MF_00527"/>
    </source>
</evidence>